<gene>
    <name evidence="6" type="primary">HSP90-6</name>
    <name evidence="6" type="synonym">HSP89-1</name>
    <name evidence="8" type="ordered locus">At3g07770</name>
    <name evidence="10" type="ORF">F17A17.11</name>
    <name evidence="9" type="ORF">MLP3.22</name>
</gene>
<reference key="1">
    <citation type="journal article" date="2000" name="Nature">
        <title>Sequence and analysis of chromosome 3 of the plant Arabidopsis thaliana.</title>
        <authorList>
            <person name="Salanoubat M."/>
            <person name="Lemcke K."/>
            <person name="Rieger M."/>
            <person name="Ansorge W."/>
            <person name="Unseld M."/>
            <person name="Fartmann B."/>
            <person name="Valle G."/>
            <person name="Bloecker H."/>
            <person name="Perez-Alonso M."/>
            <person name="Obermaier B."/>
            <person name="Delseny M."/>
            <person name="Boutry M."/>
            <person name="Grivell L.A."/>
            <person name="Mache R."/>
            <person name="Puigdomenech P."/>
            <person name="De Simone V."/>
            <person name="Choisne N."/>
            <person name="Artiguenave F."/>
            <person name="Robert C."/>
            <person name="Brottier P."/>
            <person name="Wincker P."/>
            <person name="Cattolico L."/>
            <person name="Weissenbach J."/>
            <person name="Saurin W."/>
            <person name="Quetier F."/>
            <person name="Schaefer M."/>
            <person name="Mueller-Auer S."/>
            <person name="Gabel C."/>
            <person name="Fuchs M."/>
            <person name="Benes V."/>
            <person name="Wurmbach E."/>
            <person name="Drzonek H."/>
            <person name="Erfle H."/>
            <person name="Jordan N."/>
            <person name="Bangert S."/>
            <person name="Wiedelmann R."/>
            <person name="Kranz H."/>
            <person name="Voss H."/>
            <person name="Holland R."/>
            <person name="Brandt P."/>
            <person name="Nyakatura G."/>
            <person name="Vezzi A."/>
            <person name="D'Angelo M."/>
            <person name="Pallavicini A."/>
            <person name="Toppo S."/>
            <person name="Simionati B."/>
            <person name="Conrad A."/>
            <person name="Hornischer K."/>
            <person name="Kauer G."/>
            <person name="Loehnert T.-H."/>
            <person name="Nordsiek G."/>
            <person name="Reichelt J."/>
            <person name="Scharfe M."/>
            <person name="Schoen O."/>
            <person name="Bargues M."/>
            <person name="Terol J."/>
            <person name="Climent J."/>
            <person name="Navarro P."/>
            <person name="Collado C."/>
            <person name="Perez-Perez A."/>
            <person name="Ottenwaelder B."/>
            <person name="Duchemin D."/>
            <person name="Cooke R."/>
            <person name="Laudie M."/>
            <person name="Berger-Llauro C."/>
            <person name="Purnelle B."/>
            <person name="Masuy D."/>
            <person name="de Haan M."/>
            <person name="Maarse A.C."/>
            <person name="Alcaraz J.-P."/>
            <person name="Cottet A."/>
            <person name="Casacuberta E."/>
            <person name="Monfort A."/>
            <person name="Argiriou A."/>
            <person name="Flores M."/>
            <person name="Liguori R."/>
            <person name="Vitale D."/>
            <person name="Mannhaupt G."/>
            <person name="Haase D."/>
            <person name="Schoof H."/>
            <person name="Rudd S."/>
            <person name="Zaccaria P."/>
            <person name="Mewes H.-W."/>
            <person name="Mayer K.F.X."/>
            <person name="Kaul S."/>
            <person name="Town C.D."/>
            <person name="Koo H.L."/>
            <person name="Tallon L.J."/>
            <person name="Jenkins J."/>
            <person name="Rooney T."/>
            <person name="Rizzo M."/>
            <person name="Walts A."/>
            <person name="Utterback T."/>
            <person name="Fujii C.Y."/>
            <person name="Shea T.P."/>
            <person name="Creasy T.H."/>
            <person name="Haas B."/>
            <person name="Maiti R."/>
            <person name="Wu D."/>
            <person name="Peterson J."/>
            <person name="Van Aken S."/>
            <person name="Pai G."/>
            <person name="Militscher J."/>
            <person name="Sellers P."/>
            <person name="Gill J.E."/>
            <person name="Feldblyum T.V."/>
            <person name="Preuss D."/>
            <person name="Lin X."/>
            <person name="Nierman W.C."/>
            <person name="Salzberg S.L."/>
            <person name="White O."/>
            <person name="Venter J.C."/>
            <person name="Fraser C.M."/>
            <person name="Kaneko T."/>
            <person name="Nakamura Y."/>
            <person name="Sato S."/>
            <person name="Kato T."/>
            <person name="Asamizu E."/>
            <person name="Sasamoto S."/>
            <person name="Kimura T."/>
            <person name="Idesawa K."/>
            <person name="Kawashima K."/>
            <person name="Kishida Y."/>
            <person name="Kiyokawa C."/>
            <person name="Kohara M."/>
            <person name="Matsumoto M."/>
            <person name="Matsuno A."/>
            <person name="Muraki A."/>
            <person name="Nakayama S."/>
            <person name="Nakazaki N."/>
            <person name="Shinpo S."/>
            <person name="Takeuchi C."/>
            <person name="Wada T."/>
            <person name="Watanabe A."/>
            <person name="Yamada M."/>
            <person name="Yasuda M."/>
            <person name="Tabata S."/>
        </authorList>
    </citation>
    <scope>NUCLEOTIDE SEQUENCE [LARGE SCALE GENOMIC DNA]</scope>
    <source>
        <strain>cv. Columbia</strain>
    </source>
</reference>
<reference key="2">
    <citation type="journal article" date="2017" name="Plant J.">
        <title>Araport11: a complete reannotation of the Arabidopsis thaliana reference genome.</title>
        <authorList>
            <person name="Cheng C.Y."/>
            <person name="Krishnakumar V."/>
            <person name="Chan A.P."/>
            <person name="Thibaud-Nissen F."/>
            <person name="Schobel S."/>
            <person name="Town C.D."/>
        </authorList>
    </citation>
    <scope>GENOME REANNOTATION</scope>
    <source>
        <strain>cv. Columbia</strain>
    </source>
</reference>
<reference key="3">
    <citation type="submission" date="2006-07" db="EMBL/GenBank/DDBJ databases">
        <title>Large-scale analysis of RIKEN Arabidopsis full-length (RAFL) cDNAs.</title>
        <authorList>
            <person name="Totoki Y."/>
            <person name="Seki M."/>
            <person name="Ishida J."/>
            <person name="Nakajima M."/>
            <person name="Enju A."/>
            <person name="Kamiya A."/>
            <person name="Narusaka M."/>
            <person name="Shin-i T."/>
            <person name="Nakagawa M."/>
            <person name="Sakamoto N."/>
            <person name="Oishi K."/>
            <person name="Kohara Y."/>
            <person name="Kobayashi M."/>
            <person name="Toyoda A."/>
            <person name="Sakaki Y."/>
            <person name="Sakurai T."/>
            <person name="Iida K."/>
            <person name="Akiyama K."/>
            <person name="Satou M."/>
            <person name="Toyoda T."/>
            <person name="Konagaya A."/>
            <person name="Carninci P."/>
            <person name="Kawai J."/>
            <person name="Hayashizaki Y."/>
            <person name="Shinozaki K."/>
        </authorList>
    </citation>
    <scope>NUCLEOTIDE SEQUENCE [LARGE SCALE MRNA]</scope>
    <source>
        <strain>cv. Columbia</strain>
    </source>
</reference>
<reference key="4">
    <citation type="journal article" date="2001" name="Cell Stress Chaperones">
        <title>The Hsp90 family of proteins in Arabidopsis thaliana.</title>
        <authorList>
            <person name="Krishna P."/>
            <person name="Gloor G."/>
        </authorList>
    </citation>
    <scope>GENE FAMILY</scope>
    <scope>NOMENCLATURE</scope>
</reference>
<reference key="5">
    <citation type="journal article" date="2010" name="J. Plant Physiol.">
        <title>Expression of five AtHsp90 genes in Saccharomyces cerevisiae reveals functional differences of AtHsp90s under abiotic stresses.</title>
        <authorList>
            <person name="Song H."/>
            <person name="Fan P."/>
            <person name="Shi W."/>
            <person name="Zhao R."/>
            <person name="Li Y."/>
        </authorList>
    </citation>
    <scope>INTERACTION WITH P23-1</scope>
</reference>
<name>HS906_ARATH</name>
<comment type="function">
    <text evidence="2">Molecular chaperone which stabilizes unfolding protein intermediates and functions as a folding molecular chaperone that assists the non-covalent folding of proteins in an ATP-dependent manner.</text>
</comment>
<comment type="subunit">
    <text evidence="5">Interacts with P23-1.</text>
</comment>
<comment type="subcellular location">
    <subcellularLocation>
        <location evidence="3">Mitochondrion</location>
    </subcellularLocation>
</comment>
<comment type="similarity">
    <text evidence="7">Belongs to the heat shock protein 90 family.</text>
</comment>
<comment type="sequence caution" evidence="7">
    <conflict type="erroneous gene model prediction">
        <sequence resource="EMBL-CDS" id="AAF13098"/>
    </conflict>
</comment>
<comment type="sequence caution" evidence="7">
    <conflict type="erroneous gene model prediction">
        <sequence resource="EMBL-CDS" id="AAF21187"/>
    </conflict>
</comment>
<proteinExistence type="evidence at protein level"/>
<evidence type="ECO:0000250" key="1">
    <source>
        <dbReference type="UniProtKB" id="P02829"/>
    </source>
</evidence>
<evidence type="ECO:0000250" key="2">
    <source>
        <dbReference type="UniProtKB" id="P27323"/>
    </source>
</evidence>
<evidence type="ECO:0000255" key="3"/>
<evidence type="ECO:0000256" key="4">
    <source>
        <dbReference type="SAM" id="MobiDB-lite"/>
    </source>
</evidence>
<evidence type="ECO:0000269" key="5">
    <source>
    </source>
</evidence>
<evidence type="ECO:0000303" key="6">
    <source>
    </source>
</evidence>
<evidence type="ECO:0000305" key="7"/>
<evidence type="ECO:0000312" key="8">
    <source>
        <dbReference type="Araport" id="AT3G07770"/>
    </source>
</evidence>
<evidence type="ECO:0000312" key="9">
    <source>
        <dbReference type="EMBL" id="AAF13098.1"/>
    </source>
</evidence>
<evidence type="ECO:0000312" key="10">
    <source>
        <dbReference type="EMBL" id="AAF21187.1"/>
    </source>
</evidence>
<feature type="transit peptide" description="Mitochondrion" evidence="3">
    <location>
        <begin position="1"/>
        <end position="48"/>
    </location>
</feature>
<feature type="chain" id="PRO_0000434019" description="Heat shock protein 90-6, mitochondrial" evidence="3">
    <location>
        <begin position="49"/>
        <end position="799"/>
    </location>
</feature>
<feature type="region of interest" description="Disordered" evidence="4">
    <location>
        <begin position="23"/>
        <end position="61"/>
    </location>
</feature>
<feature type="region of interest" description="Disordered" evidence="4">
    <location>
        <begin position="314"/>
        <end position="337"/>
    </location>
</feature>
<feature type="region of interest" description="Disordered" evidence="4">
    <location>
        <begin position="766"/>
        <end position="799"/>
    </location>
</feature>
<feature type="compositionally biased region" description="Low complexity" evidence="4">
    <location>
        <begin position="23"/>
        <end position="35"/>
    </location>
</feature>
<feature type="compositionally biased region" description="Polar residues" evidence="4">
    <location>
        <begin position="46"/>
        <end position="61"/>
    </location>
</feature>
<feature type="compositionally biased region" description="Basic and acidic residues" evidence="4">
    <location>
        <begin position="322"/>
        <end position="334"/>
    </location>
</feature>
<feature type="compositionally biased region" description="Polar residues" evidence="4">
    <location>
        <begin position="766"/>
        <end position="777"/>
    </location>
</feature>
<feature type="compositionally biased region" description="Acidic residues" evidence="4">
    <location>
        <begin position="784"/>
        <end position="799"/>
    </location>
</feature>
<feature type="binding site" evidence="1">
    <location>
        <position position="124"/>
    </location>
    <ligand>
        <name>ATP</name>
        <dbReference type="ChEBI" id="CHEBI:30616"/>
    </ligand>
</feature>
<feature type="binding site" evidence="1">
    <location>
        <position position="128"/>
    </location>
    <ligand>
        <name>ATP</name>
        <dbReference type="ChEBI" id="CHEBI:30616"/>
    </ligand>
</feature>
<feature type="binding site" evidence="1">
    <location>
        <position position="170"/>
    </location>
    <ligand>
        <name>ATP</name>
        <dbReference type="ChEBI" id="CHEBI:30616"/>
    </ligand>
</feature>
<feature type="binding site" evidence="1">
    <location>
        <position position="175"/>
    </location>
    <ligand>
        <name>ATP</name>
        <dbReference type="ChEBI" id="CHEBI:30616"/>
    </ligand>
</feature>
<feature type="binding site" evidence="1">
    <location>
        <begin position="190"/>
        <end position="191"/>
    </location>
    <ligand>
        <name>ATP</name>
        <dbReference type="ChEBI" id="CHEBI:30616"/>
    </ligand>
</feature>
<feature type="binding site" evidence="1">
    <location>
        <begin position="214"/>
        <end position="219"/>
    </location>
    <ligand>
        <name>ATP</name>
        <dbReference type="ChEBI" id="CHEBI:30616"/>
    </ligand>
</feature>
<feature type="binding site" evidence="1">
    <location>
        <position position="269"/>
    </location>
    <ligand>
        <name>ATP</name>
        <dbReference type="ChEBI" id="CHEBI:30616"/>
    </ligand>
</feature>
<feature type="binding site" evidence="1">
    <location>
        <position position="464"/>
    </location>
    <ligand>
        <name>ATP</name>
        <dbReference type="ChEBI" id="CHEBI:30616"/>
    </ligand>
</feature>
<feature type="sequence conflict" description="In Ref. 3; BAF00175." evidence="7" ref="3">
    <original>S</original>
    <variation>L</variation>
    <location>
        <position position="250"/>
    </location>
</feature>
<accession>F4JFN3</accession>
<accession>A0A1I9LN11</accession>
<accession>Q0WRS4</accession>
<accession>Q9S7E7</accession>
<protein>
    <recommendedName>
        <fullName evidence="7">Heat shock protein 90-6, mitochondrial</fullName>
        <shortName evidence="7">AtHSP90.6</shortName>
        <shortName evidence="6">AtHsp90-6</shortName>
    </recommendedName>
    <alternativeName>
        <fullName evidence="7">Heat shock protein 89-1</fullName>
        <shortName evidence="6">Hsp89-1</shortName>
    </alternativeName>
</protein>
<dbReference type="EMBL" id="AC009176">
    <property type="protein sequence ID" value="AAF13098.1"/>
    <property type="status" value="ALT_SEQ"/>
    <property type="molecule type" value="Genomic_DNA"/>
</dbReference>
<dbReference type="EMBL" id="AC013483">
    <property type="protein sequence ID" value="AAF21187.1"/>
    <property type="status" value="ALT_SEQ"/>
    <property type="molecule type" value="Genomic_DNA"/>
</dbReference>
<dbReference type="EMBL" id="CP002686">
    <property type="protein sequence ID" value="AEE74602.1"/>
    <property type="molecule type" value="Genomic_DNA"/>
</dbReference>
<dbReference type="EMBL" id="CP002686">
    <property type="protein sequence ID" value="ANM63969.1"/>
    <property type="molecule type" value="Genomic_DNA"/>
</dbReference>
<dbReference type="EMBL" id="CP002686">
    <property type="protein sequence ID" value="ANM63970.1"/>
    <property type="molecule type" value="Genomic_DNA"/>
</dbReference>
<dbReference type="EMBL" id="AK228225">
    <property type="protein sequence ID" value="BAF00175.1"/>
    <property type="molecule type" value="mRNA"/>
</dbReference>
<dbReference type="SMR" id="F4JFN3"/>
<dbReference type="FunCoup" id="F4JFN3">
    <property type="interactions" value="795"/>
</dbReference>
<dbReference type="STRING" id="3702.F4JFN3"/>
<dbReference type="iPTMnet" id="F4JFN3"/>
<dbReference type="MetOSite" id="F4JFN3"/>
<dbReference type="PaxDb" id="3702-AT3G07770.1"/>
<dbReference type="ProteomicsDB" id="228809"/>
<dbReference type="EnsemblPlants" id="AT3G07770.1">
    <property type="protein sequence ID" value="AT3G07770.1"/>
    <property type="gene ID" value="AT3G07770"/>
</dbReference>
<dbReference type="EnsemblPlants" id="AT3G07770.2">
    <property type="protein sequence ID" value="AT3G07770.2"/>
    <property type="gene ID" value="AT3G07770"/>
</dbReference>
<dbReference type="EnsemblPlants" id="AT3G07770.3">
    <property type="protein sequence ID" value="AT3G07770.3"/>
    <property type="gene ID" value="AT3G07770"/>
</dbReference>
<dbReference type="Gramene" id="AT3G07770.1">
    <property type="protein sequence ID" value="AT3G07770.1"/>
    <property type="gene ID" value="AT3G07770"/>
</dbReference>
<dbReference type="Gramene" id="AT3G07770.2">
    <property type="protein sequence ID" value="AT3G07770.2"/>
    <property type="gene ID" value="AT3G07770"/>
</dbReference>
<dbReference type="Gramene" id="AT3G07770.3">
    <property type="protein sequence ID" value="AT3G07770.3"/>
    <property type="gene ID" value="AT3G07770"/>
</dbReference>
<dbReference type="KEGG" id="ath:AT3G07770"/>
<dbReference type="Araport" id="AT3G07770"/>
<dbReference type="TAIR" id="AT3G07770">
    <property type="gene designation" value="HSP89.1"/>
</dbReference>
<dbReference type="eggNOG" id="KOG0019">
    <property type="taxonomic scope" value="Eukaryota"/>
</dbReference>
<dbReference type="HOGENOM" id="CLU_006684_1_3_1"/>
<dbReference type="InParanoid" id="F4JFN3"/>
<dbReference type="OMA" id="EINPNHY"/>
<dbReference type="CD-CODE" id="4299E36E">
    <property type="entry name" value="Nucleolus"/>
</dbReference>
<dbReference type="PRO" id="PR:F4JFN3"/>
<dbReference type="Proteomes" id="UP000006548">
    <property type="component" value="Chromosome 3"/>
</dbReference>
<dbReference type="ExpressionAtlas" id="F4JFN3">
    <property type="expression patterns" value="baseline and differential"/>
</dbReference>
<dbReference type="GO" id="GO:0009570">
    <property type="term" value="C:chloroplast stroma"/>
    <property type="evidence" value="ECO:0007005"/>
    <property type="project" value="TAIR"/>
</dbReference>
<dbReference type="GO" id="GO:0005829">
    <property type="term" value="C:cytosol"/>
    <property type="evidence" value="ECO:0007005"/>
    <property type="project" value="TAIR"/>
</dbReference>
<dbReference type="GO" id="GO:0005739">
    <property type="term" value="C:mitochondrion"/>
    <property type="evidence" value="ECO:0000314"/>
    <property type="project" value="TAIR"/>
</dbReference>
<dbReference type="GO" id="GO:0009505">
    <property type="term" value="C:plant-type cell wall"/>
    <property type="evidence" value="ECO:0007005"/>
    <property type="project" value="TAIR"/>
</dbReference>
<dbReference type="GO" id="GO:0005524">
    <property type="term" value="F:ATP binding"/>
    <property type="evidence" value="ECO:0007005"/>
    <property type="project" value="TAIR"/>
</dbReference>
<dbReference type="GO" id="GO:0016887">
    <property type="term" value="F:ATP hydrolysis activity"/>
    <property type="evidence" value="ECO:0007669"/>
    <property type="project" value="InterPro"/>
</dbReference>
<dbReference type="GO" id="GO:0140662">
    <property type="term" value="F:ATP-dependent protein folding chaperone"/>
    <property type="evidence" value="ECO:0007669"/>
    <property type="project" value="InterPro"/>
</dbReference>
<dbReference type="GO" id="GO:0051082">
    <property type="term" value="F:unfolded protein binding"/>
    <property type="evidence" value="ECO:0007669"/>
    <property type="project" value="InterPro"/>
</dbReference>
<dbReference type="CDD" id="cd16927">
    <property type="entry name" value="HATPase_Hsp90-like"/>
    <property type="match status" value="1"/>
</dbReference>
<dbReference type="FunFam" id="3.40.50.11260:FF:000005">
    <property type="entry name" value="Heat shock protein 90"/>
    <property type="match status" value="1"/>
</dbReference>
<dbReference type="FunFam" id="1.20.120.790:FF:000001">
    <property type="entry name" value="Heat shock protein 90 alpha"/>
    <property type="match status" value="1"/>
</dbReference>
<dbReference type="FunFam" id="3.30.230.80:FF:000005">
    <property type="entry name" value="heat shock protein 90-5, chloroplastic"/>
    <property type="match status" value="1"/>
</dbReference>
<dbReference type="FunFam" id="3.30.565.10:FF:000024">
    <property type="entry name" value="heat shock protein 90-5, chloroplastic"/>
    <property type="match status" value="1"/>
</dbReference>
<dbReference type="Gene3D" id="3.30.230.80">
    <property type="match status" value="1"/>
</dbReference>
<dbReference type="Gene3D" id="3.40.50.11260">
    <property type="match status" value="1"/>
</dbReference>
<dbReference type="Gene3D" id="1.20.120.790">
    <property type="entry name" value="Heat shock protein 90, C-terminal domain"/>
    <property type="match status" value="1"/>
</dbReference>
<dbReference type="Gene3D" id="3.30.565.10">
    <property type="entry name" value="Histidine kinase-like ATPase, C-terminal domain"/>
    <property type="match status" value="1"/>
</dbReference>
<dbReference type="HAMAP" id="MF_00505">
    <property type="entry name" value="HSP90"/>
    <property type="match status" value="1"/>
</dbReference>
<dbReference type="InterPro" id="IPR036890">
    <property type="entry name" value="HATPase_C_sf"/>
</dbReference>
<dbReference type="InterPro" id="IPR019805">
    <property type="entry name" value="Heat_shock_protein_90_CS"/>
</dbReference>
<dbReference type="InterPro" id="IPR037196">
    <property type="entry name" value="HSP90_C"/>
</dbReference>
<dbReference type="InterPro" id="IPR001404">
    <property type="entry name" value="Hsp90_fam"/>
</dbReference>
<dbReference type="InterPro" id="IPR020575">
    <property type="entry name" value="Hsp90_N"/>
</dbReference>
<dbReference type="InterPro" id="IPR020568">
    <property type="entry name" value="Ribosomal_Su5_D2-typ_SF"/>
</dbReference>
<dbReference type="NCBIfam" id="NF003555">
    <property type="entry name" value="PRK05218.1"/>
    <property type="match status" value="1"/>
</dbReference>
<dbReference type="PANTHER" id="PTHR11528">
    <property type="entry name" value="HEAT SHOCK PROTEIN 90 FAMILY MEMBER"/>
    <property type="match status" value="1"/>
</dbReference>
<dbReference type="Pfam" id="PF13589">
    <property type="entry name" value="HATPase_c_3"/>
    <property type="match status" value="1"/>
</dbReference>
<dbReference type="Pfam" id="PF00183">
    <property type="entry name" value="HSP90"/>
    <property type="match status" value="1"/>
</dbReference>
<dbReference type="PIRSF" id="PIRSF002583">
    <property type="entry name" value="Hsp90"/>
    <property type="match status" value="1"/>
</dbReference>
<dbReference type="PRINTS" id="PR00775">
    <property type="entry name" value="HEATSHOCK90"/>
</dbReference>
<dbReference type="SUPFAM" id="SSF55874">
    <property type="entry name" value="ATPase domain of HSP90 chaperone/DNA topoisomerase II/histidine kinase"/>
    <property type="match status" value="1"/>
</dbReference>
<dbReference type="SUPFAM" id="SSF110942">
    <property type="entry name" value="HSP90 C-terminal domain"/>
    <property type="match status" value="1"/>
</dbReference>
<dbReference type="SUPFAM" id="SSF54211">
    <property type="entry name" value="Ribosomal protein S5 domain 2-like"/>
    <property type="match status" value="1"/>
</dbReference>
<dbReference type="PROSITE" id="PS00298">
    <property type="entry name" value="HSP90"/>
    <property type="match status" value="1"/>
</dbReference>
<organism>
    <name type="scientific">Arabidopsis thaliana</name>
    <name type="common">Mouse-ear cress</name>
    <dbReference type="NCBI Taxonomy" id="3702"/>
    <lineage>
        <taxon>Eukaryota</taxon>
        <taxon>Viridiplantae</taxon>
        <taxon>Streptophyta</taxon>
        <taxon>Embryophyta</taxon>
        <taxon>Tracheophyta</taxon>
        <taxon>Spermatophyta</taxon>
        <taxon>Magnoliopsida</taxon>
        <taxon>eudicotyledons</taxon>
        <taxon>Gunneridae</taxon>
        <taxon>Pentapetalae</taxon>
        <taxon>rosids</taxon>
        <taxon>malvids</taxon>
        <taxon>Brassicales</taxon>
        <taxon>Brassicaceae</taxon>
        <taxon>Camelineae</taxon>
        <taxon>Arabidopsis</taxon>
    </lineage>
</organism>
<sequence length="799" mass="90567">MIRLSKRSVSTLLRSGNQSFRIAAAASTSRSSPSATDVKRSDTESRWYSSLTNGQSKNSGSFAQLNMKTNWFMGYRNESSAAASDSSSQAPPPAEKFEYQAEVSRLMDLIVNSLYSNKEVFLRELISNASDALDKLRYLSVTNPELSKDAPDLDIRIYADKENGIITLTDSGIGMTRQELVDCLGTIAQSGTAKFMKALKDSKDAGGDNNLIGQFGVGFYSAFLVADRVIVSTKSPKSDKQYVWEGEANSSSFTIQEDTDPQSLIPRGTRITLHLKQEAKNFADPERIQKLVKNYSQFVSFPIYTWQEKGYTKEVEVEDDPTETKKDDQDDQTEKKKKTKKVVERYWDWELTNETQPIWLRNPKEVTTAEYNEFYRKAFNEYLDPLASSHFTTEGEVEFRSILYVPPVSPSGKDDIVNQKTKNIRLYVKRVFISDDFDGELFPRYLSFVKGVVDSHDLPLNVSREILQESRIVRIMKKRLVRKAFDMILGISLSENREDYEKFWDNFGKHLKLGCIEDRENHKRIAPLLRFFSSQSENDMISLDEYVENMKPEQKAIYFIASDSITSAKNAPFLEKMLEKGLEVLYLVEPIDEVAVQSLKAYKEKDFVDISKEDLDLGDKNEEKEAAVKKEFGQTCDWIKKRLGDKVASVQISNRLSSSPCVLVSGKFGWSANMERLMKAQSTGDTISLDYMKGRRVFEINPDHSIIKNINAAYNSNPNDEDAMRAIDLMYDAALVSSGFTPDNPAELGGKIYEMMDVALSGKWSSPEVQPQQQQMAHSHDAETFEAEVVEPVEVDGKK</sequence>
<keyword id="KW-0067">ATP-binding</keyword>
<keyword id="KW-0143">Chaperone</keyword>
<keyword id="KW-0496">Mitochondrion</keyword>
<keyword id="KW-0547">Nucleotide-binding</keyword>
<keyword id="KW-1185">Reference proteome</keyword>
<keyword id="KW-0346">Stress response</keyword>
<keyword id="KW-0809">Transit peptide</keyword>